<protein>
    <recommendedName>
        <fullName evidence="1">Large ribosomal subunit protein uL2</fullName>
    </recommendedName>
    <alternativeName>
        <fullName evidence="3">50S ribosomal protein L2</fullName>
    </alternativeName>
</protein>
<evidence type="ECO:0000255" key="1">
    <source>
        <dbReference type="HAMAP-Rule" id="MF_01320"/>
    </source>
</evidence>
<evidence type="ECO:0000256" key="2">
    <source>
        <dbReference type="SAM" id="MobiDB-lite"/>
    </source>
</evidence>
<evidence type="ECO:0000305" key="3"/>
<dbReference type="EMBL" id="CP001113">
    <property type="protein sequence ID" value="ACF61931.1"/>
    <property type="molecule type" value="Genomic_DNA"/>
</dbReference>
<dbReference type="RefSeq" id="WP_000301869.1">
    <property type="nucleotide sequence ID" value="NZ_CCMR01000003.1"/>
</dbReference>
<dbReference type="SMR" id="B4SUT7"/>
<dbReference type="GeneID" id="97393170"/>
<dbReference type="KEGG" id="see:SNSL254_A3706"/>
<dbReference type="HOGENOM" id="CLU_036235_2_1_6"/>
<dbReference type="Proteomes" id="UP000008824">
    <property type="component" value="Chromosome"/>
</dbReference>
<dbReference type="GO" id="GO:0005829">
    <property type="term" value="C:cytosol"/>
    <property type="evidence" value="ECO:0007669"/>
    <property type="project" value="UniProtKB-ARBA"/>
</dbReference>
<dbReference type="GO" id="GO:0015934">
    <property type="term" value="C:large ribosomal subunit"/>
    <property type="evidence" value="ECO:0007669"/>
    <property type="project" value="InterPro"/>
</dbReference>
<dbReference type="GO" id="GO:0019843">
    <property type="term" value="F:rRNA binding"/>
    <property type="evidence" value="ECO:0007669"/>
    <property type="project" value="UniProtKB-UniRule"/>
</dbReference>
<dbReference type="GO" id="GO:0003735">
    <property type="term" value="F:structural constituent of ribosome"/>
    <property type="evidence" value="ECO:0007669"/>
    <property type="project" value="InterPro"/>
</dbReference>
<dbReference type="GO" id="GO:0016740">
    <property type="term" value="F:transferase activity"/>
    <property type="evidence" value="ECO:0007669"/>
    <property type="project" value="InterPro"/>
</dbReference>
<dbReference type="GO" id="GO:0002181">
    <property type="term" value="P:cytoplasmic translation"/>
    <property type="evidence" value="ECO:0007669"/>
    <property type="project" value="TreeGrafter"/>
</dbReference>
<dbReference type="FunFam" id="2.30.30.30:FF:000001">
    <property type="entry name" value="50S ribosomal protein L2"/>
    <property type="match status" value="1"/>
</dbReference>
<dbReference type="FunFam" id="2.40.50.140:FF:000003">
    <property type="entry name" value="50S ribosomal protein L2"/>
    <property type="match status" value="1"/>
</dbReference>
<dbReference type="FunFam" id="4.10.950.10:FF:000001">
    <property type="entry name" value="50S ribosomal protein L2"/>
    <property type="match status" value="1"/>
</dbReference>
<dbReference type="Gene3D" id="2.30.30.30">
    <property type="match status" value="1"/>
</dbReference>
<dbReference type="Gene3D" id="2.40.50.140">
    <property type="entry name" value="Nucleic acid-binding proteins"/>
    <property type="match status" value="1"/>
</dbReference>
<dbReference type="Gene3D" id="4.10.950.10">
    <property type="entry name" value="Ribosomal protein L2, domain 3"/>
    <property type="match status" value="1"/>
</dbReference>
<dbReference type="HAMAP" id="MF_01320_B">
    <property type="entry name" value="Ribosomal_uL2_B"/>
    <property type="match status" value="1"/>
</dbReference>
<dbReference type="InterPro" id="IPR012340">
    <property type="entry name" value="NA-bd_OB-fold"/>
</dbReference>
<dbReference type="InterPro" id="IPR014722">
    <property type="entry name" value="Rib_uL2_dom2"/>
</dbReference>
<dbReference type="InterPro" id="IPR002171">
    <property type="entry name" value="Ribosomal_uL2"/>
</dbReference>
<dbReference type="InterPro" id="IPR005880">
    <property type="entry name" value="Ribosomal_uL2_bac/org-type"/>
</dbReference>
<dbReference type="InterPro" id="IPR022669">
    <property type="entry name" value="Ribosomal_uL2_C"/>
</dbReference>
<dbReference type="InterPro" id="IPR022671">
    <property type="entry name" value="Ribosomal_uL2_CS"/>
</dbReference>
<dbReference type="InterPro" id="IPR014726">
    <property type="entry name" value="Ribosomal_uL2_dom3"/>
</dbReference>
<dbReference type="InterPro" id="IPR022666">
    <property type="entry name" value="Ribosomal_uL2_RNA-bd_dom"/>
</dbReference>
<dbReference type="InterPro" id="IPR008991">
    <property type="entry name" value="Translation_prot_SH3-like_sf"/>
</dbReference>
<dbReference type="NCBIfam" id="TIGR01171">
    <property type="entry name" value="rplB_bact"/>
    <property type="match status" value="1"/>
</dbReference>
<dbReference type="PANTHER" id="PTHR13691:SF5">
    <property type="entry name" value="LARGE RIBOSOMAL SUBUNIT PROTEIN UL2M"/>
    <property type="match status" value="1"/>
</dbReference>
<dbReference type="PANTHER" id="PTHR13691">
    <property type="entry name" value="RIBOSOMAL PROTEIN L2"/>
    <property type="match status" value="1"/>
</dbReference>
<dbReference type="Pfam" id="PF00181">
    <property type="entry name" value="Ribosomal_L2"/>
    <property type="match status" value="1"/>
</dbReference>
<dbReference type="Pfam" id="PF03947">
    <property type="entry name" value="Ribosomal_L2_C"/>
    <property type="match status" value="1"/>
</dbReference>
<dbReference type="PIRSF" id="PIRSF002158">
    <property type="entry name" value="Ribosomal_L2"/>
    <property type="match status" value="1"/>
</dbReference>
<dbReference type="SMART" id="SM01383">
    <property type="entry name" value="Ribosomal_L2"/>
    <property type="match status" value="1"/>
</dbReference>
<dbReference type="SMART" id="SM01382">
    <property type="entry name" value="Ribosomal_L2_C"/>
    <property type="match status" value="1"/>
</dbReference>
<dbReference type="SUPFAM" id="SSF50249">
    <property type="entry name" value="Nucleic acid-binding proteins"/>
    <property type="match status" value="1"/>
</dbReference>
<dbReference type="SUPFAM" id="SSF50104">
    <property type="entry name" value="Translation proteins SH3-like domain"/>
    <property type="match status" value="1"/>
</dbReference>
<dbReference type="PROSITE" id="PS00467">
    <property type="entry name" value="RIBOSOMAL_L2"/>
    <property type="match status" value="1"/>
</dbReference>
<proteinExistence type="inferred from homology"/>
<sequence>MAVVKCKPTSPGRRHVVKVVNPELHKGKPFAPLVEKNSKSGGRNNNGRITTRHIGGGHKQAYRIVDFKRNKDGIPAVVERLEYDPNRSANIALVLYKDGERRYILAPKGLKAGDQIQSGVDAAIKAGNTLPMRNIPVGSTVHNVEMKPGKGGQLARSAGTYVQIVARDGAYVTLRLRSGEMRKVEADCRATLGEVGNAEHMLRVLGKAGAARWRGVRPTVRGTAMNPVDHPHGGGEGRNFGKHPVTPWGVQTKGKKTRSNKRTDKFIVRRRSK</sequence>
<comment type="function">
    <text evidence="1">One of the primary rRNA binding proteins. Required for association of the 30S and 50S subunits to form the 70S ribosome, for tRNA binding and peptide bond formation. It has been suggested to have peptidyltransferase activity; this is somewhat controversial. Makes several contacts with the 16S rRNA in the 70S ribosome.</text>
</comment>
<comment type="subunit">
    <text evidence="1">Part of the 50S ribosomal subunit. Forms a bridge to the 30S subunit in the 70S ribosome.</text>
</comment>
<comment type="similarity">
    <text evidence="1">Belongs to the universal ribosomal protein uL2 family.</text>
</comment>
<organism>
    <name type="scientific">Salmonella newport (strain SL254)</name>
    <dbReference type="NCBI Taxonomy" id="423368"/>
    <lineage>
        <taxon>Bacteria</taxon>
        <taxon>Pseudomonadati</taxon>
        <taxon>Pseudomonadota</taxon>
        <taxon>Gammaproteobacteria</taxon>
        <taxon>Enterobacterales</taxon>
        <taxon>Enterobacteriaceae</taxon>
        <taxon>Salmonella</taxon>
    </lineage>
</organism>
<feature type="chain" id="PRO_1000141611" description="Large ribosomal subunit protein uL2">
    <location>
        <begin position="1"/>
        <end position="273"/>
    </location>
</feature>
<feature type="region of interest" description="Disordered" evidence="2">
    <location>
        <begin position="28"/>
        <end position="53"/>
    </location>
</feature>
<feature type="region of interest" description="Disordered" evidence="2">
    <location>
        <begin position="221"/>
        <end position="273"/>
    </location>
</feature>
<feature type="compositionally biased region" description="Low complexity" evidence="2">
    <location>
        <begin position="39"/>
        <end position="48"/>
    </location>
</feature>
<reference key="1">
    <citation type="journal article" date="2011" name="J. Bacteriol.">
        <title>Comparative genomics of 28 Salmonella enterica isolates: evidence for CRISPR-mediated adaptive sublineage evolution.</title>
        <authorList>
            <person name="Fricke W.F."/>
            <person name="Mammel M.K."/>
            <person name="McDermott P.F."/>
            <person name="Tartera C."/>
            <person name="White D.G."/>
            <person name="Leclerc J.E."/>
            <person name="Ravel J."/>
            <person name="Cebula T.A."/>
        </authorList>
    </citation>
    <scope>NUCLEOTIDE SEQUENCE [LARGE SCALE GENOMIC DNA]</scope>
    <source>
        <strain>SL254</strain>
    </source>
</reference>
<keyword id="KW-0687">Ribonucleoprotein</keyword>
<keyword id="KW-0689">Ribosomal protein</keyword>
<keyword id="KW-0694">RNA-binding</keyword>
<keyword id="KW-0699">rRNA-binding</keyword>
<gene>
    <name evidence="1" type="primary">rplB</name>
    <name type="ordered locus">SNSL254_A3706</name>
</gene>
<name>RL2_SALNS</name>
<accession>B4SUT7</accession>